<gene>
    <name evidence="1" type="primary">cbpM</name>
    <name type="ordered locus">EcHS_A1111</name>
</gene>
<accession>A7ZYV1</accession>
<reference key="1">
    <citation type="journal article" date="2008" name="J. Bacteriol.">
        <title>The pangenome structure of Escherichia coli: comparative genomic analysis of E. coli commensal and pathogenic isolates.</title>
        <authorList>
            <person name="Rasko D.A."/>
            <person name="Rosovitz M.J."/>
            <person name="Myers G.S.A."/>
            <person name="Mongodin E.F."/>
            <person name="Fricke W.F."/>
            <person name="Gajer P."/>
            <person name="Crabtree J."/>
            <person name="Sebaihia M."/>
            <person name="Thomson N.R."/>
            <person name="Chaudhuri R."/>
            <person name="Henderson I.R."/>
            <person name="Sperandio V."/>
            <person name="Ravel J."/>
        </authorList>
    </citation>
    <scope>NUCLEOTIDE SEQUENCE [LARGE SCALE GENOMIC DNA]</scope>
    <source>
        <strain>HS</strain>
    </source>
</reference>
<sequence length="101" mass="11512">MANVTVTFTITEFCLHTGISEEELNEIVGLGVVEPREIQETTWVFDDHAAIVVQRAVRLRHELALDWPGIAVALTLMDDIAHLKQENRLLRQRLSRFVAHP</sequence>
<evidence type="ECO:0000255" key="1">
    <source>
        <dbReference type="HAMAP-Rule" id="MF_01155"/>
    </source>
</evidence>
<proteinExistence type="inferred from homology"/>
<organism>
    <name type="scientific">Escherichia coli O9:H4 (strain HS)</name>
    <dbReference type="NCBI Taxonomy" id="331112"/>
    <lineage>
        <taxon>Bacteria</taxon>
        <taxon>Pseudomonadati</taxon>
        <taxon>Pseudomonadota</taxon>
        <taxon>Gammaproteobacteria</taxon>
        <taxon>Enterobacterales</taxon>
        <taxon>Enterobacteriaceae</taxon>
        <taxon>Escherichia</taxon>
    </lineage>
</organism>
<feature type="chain" id="PRO_1000065532" description="Chaperone modulatory protein CbpM">
    <location>
        <begin position="1"/>
        <end position="101"/>
    </location>
</feature>
<protein>
    <recommendedName>
        <fullName evidence="1">Chaperone modulatory protein CbpM</fullName>
    </recommendedName>
</protein>
<comment type="function">
    <text evidence="1">Interacts with CbpA and inhibits both the DnaJ-like co-chaperone activity and the DNA binding activity of CbpA. Together with CbpA, modulates the activity of the DnaK chaperone system. Does not inhibit the co-chaperone activity of DnaJ.</text>
</comment>
<comment type="similarity">
    <text evidence="1">Belongs to the CbpM family.</text>
</comment>
<name>CBPM_ECOHS</name>
<dbReference type="EMBL" id="CP000802">
    <property type="protein sequence ID" value="ABV05455.1"/>
    <property type="molecule type" value="Genomic_DNA"/>
</dbReference>
<dbReference type="RefSeq" id="WP_000024560.1">
    <property type="nucleotide sequence ID" value="NC_009800.1"/>
</dbReference>
<dbReference type="SMR" id="A7ZYV1"/>
<dbReference type="GeneID" id="93776412"/>
<dbReference type="KEGG" id="ecx:EcHS_A1111"/>
<dbReference type="HOGENOM" id="CLU_144710_3_1_6"/>
<dbReference type="FunFam" id="1.10.1660.10:FF:000006">
    <property type="entry name" value="Chaperone modulatory protein CbpM"/>
    <property type="match status" value="1"/>
</dbReference>
<dbReference type="Gene3D" id="1.10.1660.10">
    <property type="match status" value="1"/>
</dbReference>
<dbReference type="HAMAP" id="MF_01155">
    <property type="entry name" value="CbpM"/>
    <property type="match status" value="1"/>
</dbReference>
<dbReference type="InterPro" id="IPR022835">
    <property type="entry name" value="CbpM"/>
</dbReference>
<dbReference type="NCBIfam" id="NF007617">
    <property type="entry name" value="PRK10265.1"/>
    <property type="match status" value="1"/>
</dbReference>
<dbReference type="Pfam" id="PF13591">
    <property type="entry name" value="MerR_2"/>
    <property type="match status" value="1"/>
</dbReference>